<feature type="chain" id="PRO_0000051400" description="WD repeat-containing protein 48">
    <location>
        <begin position="1"/>
        <end position="622"/>
    </location>
</feature>
<feature type="repeat" description="WD 1" evidence="3">
    <location>
        <begin position="28"/>
        <end position="67"/>
    </location>
</feature>
<feature type="repeat" description="WD 2" evidence="3">
    <location>
        <begin position="73"/>
        <end position="112"/>
    </location>
</feature>
<feature type="repeat" description="WD 3" evidence="3">
    <location>
        <begin position="115"/>
        <end position="154"/>
    </location>
</feature>
<feature type="repeat" description="WD 4" evidence="3">
    <location>
        <begin position="166"/>
        <end position="205"/>
    </location>
</feature>
<feature type="repeat" description="WD 5" evidence="3">
    <location>
        <begin position="208"/>
        <end position="247"/>
    </location>
</feature>
<feature type="repeat" description="WD 6" evidence="3">
    <location>
        <begin position="250"/>
        <end position="289"/>
    </location>
</feature>
<feature type="repeat" description="WD 7" evidence="3">
    <location>
        <begin position="292"/>
        <end position="334"/>
    </location>
</feature>
<feature type="repeat" description="WD 8" evidence="3">
    <location>
        <begin position="358"/>
        <end position="397"/>
    </location>
</feature>
<feature type="region of interest" description="Disordered" evidence="4">
    <location>
        <begin position="552"/>
        <end position="573"/>
    </location>
</feature>
<feature type="compositionally biased region" description="Low complexity" evidence="4">
    <location>
        <begin position="554"/>
        <end position="565"/>
    </location>
</feature>
<feature type="modified residue" description="Phosphotyrosine" evidence="1">
    <location>
        <position position="28"/>
    </location>
</feature>
<feature type="modified residue" description="N6-acetyllysine" evidence="2">
    <location>
        <position position="214"/>
    </location>
</feature>
<feature type="modified residue" description="N6-acetyllysine" evidence="1">
    <location>
        <position position="523"/>
    </location>
</feature>
<feature type="modified residue" description="Phosphothreonine" evidence="2">
    <location>
        <position position="558"/>
    </location>
</feature>
<reference key="1">
    <citation type="submission" date="2005-06" db="EMBL/GenBank/DDBJ databases">
        <title>DNA sequences of macaque genes expressed in brain or testis and its evolutionary implications.</title>
        <authorList>
            <consortium name="International consortium for macaque cDNA sequencing and analysis"/>
        </authorList>
    </citation>
    <scope>NUCLEOTIDE SEQUENCE [LARGE SCALE MRNA]</scope>
    <source>
        <tissue>Testis</tissue>
    </source>
</reference>
<organism evidence="6">
    <name type="scientific">Macaca fascicularis</name>
    <name type="common">Crab-eating macaque</name>
    <name type="synonym">Cynomolgus monkey</name>
    <dbReference type="NCBI Taxonomy" id="9541"/>
    <lineage>
        <taxon>Eukaryota</taxon>
        <taxon>Metazoa</taxon>
        <taxon>Chordata</taxon>
        <taxon>Craniata</taxon>
        <taxon>Vertebrata</taxon>
        <taxon>Euteleostomi</taxon>
        <taxon>Mammalia</taxon>
        <taxon>Eutheria</taxon>
        <taxon>Euarchontoglires</taxon>
        <taxon>Primates</taxon>
        <taxon>Haplorrhini</taxon>
        <taxon>Catarrhini</taxon>
        <taxon>Cercopithecidae</taxon>
        <taxon>Cercopithecinae</taxon>
        <taxon>Macaca</taxon>
    </lineage>
</organism>
<name>WDR48_MACFA</name>
<protein>
    <recommendedName>
        <fullName>WD repeat-containing protein 48</fullName>
    </recommendedName>
    <alternativeName>
        <fullName>USP1-associated factor 1</fullName>
    </alternativeName>
</protein>
<keyword id="KW-0007">Acetylation</keyword>
<keyword id="KW-0963">Cytoplasm</keyword>
<keyword id="KW-0227">DNA damage</keyword>
<keyword id="KW-0234">DNA repair</keyword>
<keyword id="KW-0238">DNA-binding</keyword>
<keyword id="KW-0967">Endosome</keyword>
<keyword id="KW-0458">Lysosome</keyword>
<keyword id="KW-0539">Nucleus</keyword>
<keyword id="KW-0597">Phosphoprotein</keyword>
<keyword id="KW-1185">Reference proteome</keyword>
<keyword id="KW-0677">Repeat</keyword>
<keyword id="KW-0833">Ubl conjugation pathway</keyword>
<keyword id="KW-0853">WD repeat</keyword>
<comment type="function">
    <text evidence="2">Regulator of deubiquitinating complexes, which acts as a strong activator of USP1, USP12 and USP46. Enhances the USP1-mediated deubiquitination of FANCD2; USP1 being almost inactive by itself. Activates deubiquitination by increasing the catalytic turnover without increasing the affinity of deubiquitinating enzymes for the substrate. Also activates deubiquitinating activity of complexes containing USP12. Docks at the distal end of the USP12 fingers domain and induces a cascade of structural changes leading to the activation of the enzyme. Together with RAD51AP1, promotes DNA repair by stimulating RAD51-mediated homologous recombination. Binds single-stranded DNA (ssDNA) and double-stranded DNA (dsDNA). DNA-binding is required both for USP1-mediated deubiquitination of FANCD2 and stimulation of RAD51-mediated homologous recombination: both WDR48/UAF1 and RAD51AP1 have coordinated role in DNA-binding during these processes. Together with ATAD5 and by regulating USP1 activity, has a role in PCNA-mediated translesion synthesis (TLS) by deubiquitinating monoubiquitinated PCNA. Together with ATAD5, has a role in recruiting RAD51 to stalled forks during replication stress.</text>
</comment>
<comment type="subunit">
    <text evidence="2">Interacts with USP46. Interacts with USP1. Interacts with USP12. Component of the USP12-WDR20-WDR48 deubiquitinating complex. Component of the USP12-DMWD-WDR48 deubiquitinating complex. Interacts with PHLPP1. Interacts with RAD51AP1; the interaction is direct and promotes formation of a trimeric complex with RAD51 via RAD51AP1. Interacts with ATAD5; the interaction regulates USP1-mediated PCNA deubiquitination. Interacts with RAD51; the interaction is enhanced under replication stress. Interacts with ITCH; the interaction is more efficient when both USP12 and WDR48/UAF1 are involved and may facilitate recruitment of the USP12 deubiquitinating complex to Notch.</text>
</comment>
<comment type="subcellular location">
    <subcellularLocation>
        <location evidence="2">Nucleus</location>
    </subcellularLocation>
    <subcellularLocation>
        <location evidence="2">Cytoplasm</location>
    </subcellularLocation>
    <subcellularLocation>
        <location evidence="2">Lysosome</location>
    </subcellularLocation>
    <subcellularLocation>
        <location evidence="2">Late endosome</location>
    </subcellularLocation>
    <text evidence="2">Mainly in cytoplasmic compartments.</text>
</comment>
<comment type="domain">
    <text evidence="2">The WD repeats are required for the interaction with deubiquitinating enzymes USP1, USP12 and USP46.</text>
</comment>
<comment type="similarity">
    <text evidence="5">Belongs to the WD repeat WDR48 family.</text>
</comment>
<evidence type="ECO:0000250" key="1">
    <source>
        <dbReference type="UniProtKB" id="Q8BH57"/>
    </source>
</evidence>
<evidence type="ECO:0000250" key="2">
    <source>
        <dbReference type="UniProtKB" id="Q8TAF3"/>
    </source>
</evidence>
<evidence type="ECO:0000255" key="3"/>
<evidence type="ECO:0000256" key="4">
    <source>
        <dbReference type="SAM" id="MobiDB-lite"/>
    </source>
</evidence>
<evidence type="ECO:0000305" key="5"/>
<evidence type="ECO:0000312" key="6">
    <source>
        <dbReference type="Proteomes" id="UP000233100"/>
    </source>
</evidence>
<proteinExistence type="evidence at transcript level"/>
<accession>Q4R2Z6</accession>
<sequence>MAAHHRQNTAGRRKVQVSYVIRDEVEKYNRNGVNALQLDPALNRLFTAGRDSIIRIWSVNQHKQDPYIASMEHHTDWVNDIVLCCNGKTLISASSDTTVKVWNAHKGFCMSTLRTHKDYVKALAYAKDKELVASAGLDRQIFLWDVNTLTALTASNNTVTTSSLSGNKDSIYSLAMNQLGTIIVSGSTEKVLRVWDPRTCAKLMKLKGHTDNVKALLLNRDGTQCLSGSSDGTIRLWSLGQQRCIATYRVHDEGVWALQVNDAFTHVYSGGRDRKIYCTDLRNPDIRVLICEEKAPVLKMELDRSADPPPAIWVATTKSTVNKWTLKGIHNFRASGDYDNDCTNPITPLCTQPDQVIKGGASIIQCHILNDKRHILTKDTNNNVAYWVSVKDAGFSSPDGSDPKLNLGGLLLQALLEYWPRTHVNPMDEEENEVNHVNGEQENRVQKGNGYFQVPPHTPVIFGEAGGRTLFRLLCRDSGGETESMLLNETVPQWVIDITVDKNMPKFNKIPFYLQPHASSGAKTLKKDRLSASDMLQVRKVMEHVYEKIINLDNESQTTSSSNNEKPGEQEKEEDIAVLAEEKIELLCQDQVLDPNMDLRTVKHFIWKSGGDLTLHYRQKST</sequence>
<dbReference type="EMBL" id="AB179472">
    <property type="protein sequence ID" value="BAE02523.1"/>
    <property type="molecule type" value="mRNA"/>
</dbReference>
<dbReference type="SMR" id="Q4R2Z6"/>
<dbReference type="STRING" id="9541.ENSMFAP00000029073"/>
<dbReference type="Proteomes" id="UP000233100">
    <property type="component" value="Unplaced"/>
</dbReference>
<dbReference type="GO" id="GO:0005770">
    <property type="term" value="C:late endosome"/>
    <property type="evidence" value="ECO:0007669"/>
    <property type="project" value="UniProtKB-SubCell"/>
</dbReference>
<dbReference type="GO" id="GO:0005764">
    <property type="term" value="C:lysosome"/>
    <property type="evidence" value="ECO:0007669"/>
    <property type="project" value="UniProtKB-SubCell"/>
</dbReference>
<dbReference type="GO" id="GO:0005634">
    <property type="term" value="C:nucleus"/>
    <property type="evidence" value="ECO:0000250"/>
    <property type="project" value="UniProtKB"/>
</dbReference>
<dbReference type="GO" id="GO:0035800">
    <property type="term" value="F:deubiquitinase activator activity"/>
    <property type="evidence" value="ECO:0000250"/>
    <property type="project" value="UniProtKB"/>
</dbReference>
<dbReference type="GO" id="GO:0003677">
    <property type="term" value="F:DNA binding"/>
    <property type="evidence" value="ECO:0000250"/>
    <property type="project" value="UniProtKB"/>
</dbReference>
<dbReference type="GO" id="GO:0003690">
    <property type="term" value="F:double-stranded DNA binding"/>
    <property type="evidence" value="ECO:0000250"/>
    <property type="project" value="UniProtKB"/>
</dbReference>
<dbReference type="GO" id="GO:0003697">
    <property type="term" value="F:single-stranded DNA binding"/>
    <property type="evidence" value="ECO:0000250"/>
    <property type="project" value="UniProtKB"/>
</dbReference>
<dbReference type="GO" id="GO:0043130">
    <property type="term" value="F:ubiquitin binding"/>
    <property type="evidence" value="ECO:0007669"/>
    <property type="project" value="TreeGrafter"/>
</dbReference>
<dbReference type="GO" id="GO:0006974">
    <property type="term" value="P:DNA damage response"/>
    <property type="evidence" value="ECO:0000250"/>
    <property type="project" value="UniProtKB"/>
</dbReference>
<dbReference type="GO" id="GO:0000724">
    <property type="term" value="P:double-strand break repair via homologous recombination"/>
    <property type="evidence" value="ECO:0007669"/>
    <property type="project" value="TreeGrafter"/>
</dbReference>
<dbReference type="GO" id="GO:1905168">
    <property type="term" value="P:positive regulation of double-strand break repair via homologous recombination"/>
    <property type="evidence" value="ECO:0000250"/>
    <property type="project" value="UniProtKB"/>
</dbReference>
<dbReference type="CDD" id="cd17041">
    <property type="entry name" value="Ubl_WDR48"/>
    <property type="match status" value="1"/>
</dbReference>
<dbReference type="CDD" id="cd00200">
    <property type="entry name" value="WD40"/>
    <property type="match status" value="1"/>
</dbReference>
<dbReference type="FunFam" id="2.130.10.10:FF:000054">
    <property type="entry name" value="Putative WD repeat-containing protein 48"/>
    <property type="match status" value="1"/>
</dbReference>
<dbReference type="FunFam" id="2.130.10.10:FF:002031">
    <property type="entry name" value="WD repeat domain 48b"/>
    <property type="match status" value="1"/>
</dbReference>
<dbReference type="Gene3D" id="2.130.10.10">
    <property type="entry name" value="YVTN repeat-like/Quinoprotein amine dehydrogenase"/>
    <property type="match status" value="2"/>
</dbReference>
<dbReference type="InterPro" id="IPR020472">
    <property type="entry name" value="G-protein_beta_WD-40_rep"/>
</dbReference>
<dbReference type="InterPro" id="IPR015943">
    <property type="entry name" value="WD40/YVTN_repeat-like_dom_sf"/>
</dbReference>
<dbReference type="InterPro" id="IPR019775">
    <property type="entry name" value="WD40_repeat_CS"/>
</dbReference>
<dbReference type="InterPro" id="IPR036322">
    <property type="entry name" value="WD40_repeat_dom_sf"/>
</dbReference>
<dbReference type="InterPro" id="IPR001680">
    <property type="entry name" value="WD40_rpt"/>
</dbReference>
<dbReference type="InterPro" id="IPR051246">
    <property type="entry name" value="WDR48"/>
</dbReference>
<dbReference type="InterPro" id="IPR021772">
    <property type="entry name" value="WDR48/Bun107"/>
</dbReference>
<dbReference type="PANTHER" id="PTHR19862">
    <property type="entry name" value="WD REPEAT-CONTAINING PROTEIN 48"/>
    <property type="match status" value="1"/>
</dbReference>
<dbReference type="PANTHER" id="PTHR19862:SF14">
    <property type="entry name" value="WD REPEAT-CONTAINING PROTEIN 48"/>
    <property type="match status" value="1"/>
</dbReference>
<dbReference type="Pfam" id="PF11816">
    <property type="entry name" value="DUF3337"/>
    <property type="match status" value="1"/>
</dbReference>
<dbReference type="Pfam" id="PF00400">
    <property type="entry name" value="WD40"/>
    <property type="match status" value="6"/>
</dbReference>
<dbReference type="PRINTS" id="PR00320">
    <property type="entry name" value="GPROTEINBRPT"/>
</dbReference>
<dbReference type="SMART" id="SM00320">
    <property type="entry name" value="WD40"/>
    <property type="match status" value="6"/>
</dbReference>
<dbReference type="SUPFAM" id="SSF50978">
    <property type="entry name" value="WD40 repeat-like"/>
    <property type="match status" value="1"/>
</dbReference>
<dbReference type="PROSITE" id="PS00678">
    <property type="entry name" value="WD_REPEATS_1"/>
    <property type="match status" value="2"/>
</dbReference>
<dbReference type="PROSITE" id="PS50082">
    <property type="entry name" value="WD_REPEATS_2"/>
    <property type="match status" value="5"/>
</dbReference>
<dbReference type="PROSITE" id="PS50294">
    <property type="entry name" value="WD_REPEATS_REGION"/>
    <property type="match status" value="4"/>
</dbReference>
<gene>
    <name type="primary">WDR48</name>
    <name type="synonym">UAF1</name>
    <name type="ORF">QtsA-20837</name>
</gene>